<reference key="1">
    <citation type="journal article" date="2008" name="J. Bacteriol.">
        <title>The complete genome sequence of Escherichia coli DH10B: insights into the biology of a laboratory workhorse.</title>
        <authorList>
            <person name="Durfee T."/>
            <person name="Nelson R."/>
            <person name="Baldwin S."/>
            <person name="Plunkett G. III"/>
            <person name="Burland V."/>
            <person name="Mau B."/>
            <person name="Petrosino J.F."/>
            <person name="Qin X."/>
            <person name="Muzny D.M."/>
            <person name="Ayele M."/>
            <person name="Gibbs R.A."/>
            <person name="Csorgo B."/>
            <person name="Posfai G."/>
            <person name="Weinstock G.M."/>
            <person name="Blattner F.R."/>
        </authorList>
    </citation>
    <scope>NUCLEOTIDE SEQUENCE [LARGE SCALE GENOMIC DNA]</scope>
    <source>
        <strain>K12 / DH10B</strain>
    </source>
</reference>
<keyword id="KW-0963">Cytoplasm</keyword>
<keyword id="KW-0489">Methyltransferase</keyword>
<keyword id="KW-0949">S-adenosyl-L-methionine</keyword>
<keyword id="KW-0808">Transferase</keyword>
<keyword id="KW-0819">tRNA processing</keyword>
<evidence type="ECO:0000255" key="1">
    <source>
        <dbReference type="HAMAP-Rule" id="MF_01872"/>
    </source>
</evidence>
<feature type="chain" id="PRO_0000387360" description="tRNA1(Val) (adenine(37)-N6)-methyltransferase">
    <location>
        <begin position="1"/>
        <end position="245"/>
    </location>
</feature>
<gene>
    <name evidence="1" type="primary">yfiC</name>
    <name type="ordered locus">ECDH10B_2743</name>
</gene>
<dbReference type="EC" id="2.1.1.223" evidence="1"/>
<dbReference type="EMBL" id="CP000948">
    <property type="protein sequence ID" value="ACB03726.1"/>
    <property type="molecule type" value="Genomic_DNA"/>
</dbReference>
<dbReference type="SMR" id="B1XBQ2"/>
<dbReference type="DNASU" id="6060703"/>
<dbReference type="KEGG" id="ecd:ECDH10B_2743"/>
<dbReference type="HOGENOM" id="CLU_061983_0_0_6"/>
<dbReference type="GO" id="GO:0005737">
    <property type="term" value="C:cytoplasm"/>
    <property type="evidence" value="ECO:0007669"/>
    <property type="project" value="UniProtKB-SubCell"/>
</dbReference>
<dbReference type="GO" id="GO:0003676">
    <property type="term" value="F:nucleic acid binding"/>
    <property type="evidence" value="ECO:0007669"/>
    <property type="project" value="InterPro"/>
</dbReference>
<dbReference type="GO" id="GO:0016430">
    <property type="term" value="F:tRNA (adenine-N6)-methyltransferase activity"/>
    <property type="evidence" value="ECO:0007669"/>
    <property type="project" value="UniProtKB-UniRule"/>
</dbReference>
<dbReference type="GO" id="GO:0032259">
    <property type="term" value="P:methylation"/>
    <property type="evidence" value="ECO:0007669"/>
    <property type="project" value="UniProtKB-KW"/>
</dbReference>
<dbReference type="GO" id="GO:0008033">
    <property type="term" value="P:tRNA processing"/>
    <property type="evidence" value="ECO:0007669"/>
    <property type="project" value="UniProtKB-UniRule"/>
</dbReference>
<dbReference type="CDD" id="cd02440">
    <property type="entry name" value="AdoMet_MTases"/>
    <property type="match status" value="1"/>
</dbReference>
<dbReference type="FunFam" id="3.40.50.150:FF:000087">
    <property type="entry name" value="tRNA1(Val) (adenine(37)-N6)-methyltransferase"/>
    <property type="match status" value="1"/>
</dbReference>
<dbReference type="Gene3D" id="3.40.50.150">
    <property type="entry name" value="Vaccinia Virus protein VP39"/>
    <property type="match status" value="1"/>
</dbReference>
<dbReference type="HAMAP" id="MF_01872">
    <property type="entry name" value="tRNA_methyltr_YfiC"/>
    <property type="match status" value="1"/>
</dbReference>
<dbReference type="InterPro" id="IPR002052">
    <property type="entry name" value="DNA_methylase_N6_adenine_CS"/>
</dbReference>
<dbReference type="InterPro" id="IPR029063">
    <property type="entry name" value="SAM-dependent_MTases_sf"/>
</dbReference>
<dbReference type="InterPro" id="IPR007848">
    <property type="entry name" value="Small_mtfrase_dom"/>
</dbReference>
<dbReference type="InterPro" id="IPR050210">
    <property type="entry name" value="tRNA_Adenine-N(6)_MTase"/>
</dbReference>
<dbReference type="InterPro" id="IPR022882">
    <property type="entry name" value="tRNA_adenine-N6_MeTrfase"/>
</dbReference>
<dbReference type="NCBIfam" id="NF047853">
    <property type="entry name" value="tRm6a37MtseTrmN"/>
    <property type="match status" value="1"/>
</dbReference>
<dbReference type="PANTHER" id="PTHR47739">
    <property type="entry name" value="TRNA1(VAL) (ADENINE(37)-N6)-METHYLTRANSFERASE"/>
    <property type="match status" value="1"/>
</dbReference>
<dbReference type="PANTHER" id="PTHR47739:SF1">
    <property type="entry name" value="TRNA1(VAL) (ADENINE(37)-N6)-METHYLTRANSFERASE"/>
    <property type="match status" value="1"/>
</dbReference>
<dbReference type="Pfam" id="PF05175">
    <property type="entry name" value="MTS"/>
    <property type="match status" value="1"/>
</dbReference>
<dbReference type="SUPFAM" id="SSF53335">
    <property type="entry name" value="S-adenosyl-L-methionine-dependent methyltransferases"/>
    <property type="match status" value="1"/>
</dbReference>
<dbReference type="PROSITE" id="PS00092">
    <property type="entry name" value="N6_MTASE"/>
    <property type="match status" value="1"/>
</dbReference>
<comment type="function">
    <text evidence="1">Specifically methylates the adenine in position 37 of tRNA(1)(Val) (anticodon cmo5UAC).</text>
</comment>
<comment type="catalytic activity">
    <reaction evidence="1">
        <text>adenosine(37) in tRNA1(Val) + S-adenosyl-L-methionine = N(6)-methyladenosine(37) in tRNA1(Val) + S-adenosyl-L-homocysteine + H(+)</text>
        <dbReference type="Rhea" id="RHEA:43160"/>
        <dbReference type="Rhea" id="RHEA-COMP:10369"/>
        <dbReference type="Rhea" id="RHEA-COMP:10370"/>
        <dbReference type="ChEBI" id="CHEBI:15378"/>
        <dbReference type="ChEBI" id="CHEBI:57856"/>
        <dbReference type="ChEBI" id="CHEBI:59789"/>
        <dbReference type="ChEBI" id="CHEBI:74411"/>
        <dbReference type="ChEBI" id="CHEBI:74449"/>
        <dbReference type="EC" id="2.1.1.223"/>
    </reaction>
</comment>
<comment type="subcellular location">
    <subcellularLocation>
        <location evidence="1">Cytoplasm</location>
    </subcellularLocation>
</comment>
<comment type="similarity">
    <text evidence="1">Belongs to the methyltransferase superfamily. tRNA (adenine-N(6)-)-methyltransferase family.</text>
</comment>
<proteinExistence type="inferred from homology"/>
<protein>
    <recommendedName>
        <fullName evidence="1">tRNA1(Val) (adenine(37)-N6)-methyltransferase</fullName>
        <ecNumber evidence="1">2.1.1.223</ecNumber>
    </recommendedName>
    <alternativeName>
        <fullName evidence="1">tRNA m6A37 methyltransferase</fullName>
    </alternativeName>
</protein>
<accession>B1XBQ2</accession>
<sequence length="245" mass="27270">MSQSTSVLRRNGFTFKQFFVAHDRCAMKVGTDGILLGAWAPVAGVKRCLDIGAGSGLLALMLAQRTDDSVMIDAVELESEAAAQAQENINQSPWAERINVHTADIQQWITQQTVRFDLIISNPPYYQQGVECSTPQREQARYTTTLDHPSLLTCAAECITEEGFFCVVLPEQIGNGFTELALSMGWHLRLRTDVAENEARLPHRVLLAFSPQAGECFSDRLVIRGPDQNYSEAYTALTQAFYLFM</sequence>
<organism>
    <name type="scientific">Escherichia coli (strain K12 / DH10B)</name>
    <dbReference type="NCBI Taxonomy" id="316385"/>
    <lineage>
        <taxon>Bacteria</taxon>
        <taxon>Pseudomonadati</taxon>
        <taxon>Pseudomonadota</taxon>
        <taxon>Gammaproteobacteria</taxon>
        <taxon>Enterobacterales</taxon>
        <taxon>Enterobacteriaceae</taxon>
        <taxon>Escherichia</taxon>
    </lineage>
</organism>
<name>TRMN6_ECODH</name>